<protein>
    <recommendedName>
        <fullName>Heterogeneous nuclear ribonucleoprotein D0</fullName>
        <shortName>hnRNP D0</shortName>
    </recommendedName>
    <alternativeName>
        <fullName>AU-rich element RNA-binding protein 1</fullName>
    </alternativeName>
</protein>
<proteinExistence type="evidence at protein level"/>
<organism>
    <name type="scientific">Mus musculus</name>
    <name type="common">Mouse</name>
    <dbReference type="NCBI Taxonomy" id="10090"/>
    <lineage>
        <taxon>Eukaryota</taxon>
        <taxon>Metazoa</taxon>
        <taxon>Chordata</taxon>
        <taxon>Craniata</taxon>
        <taxon>Vertebrata</taxon>
        <taxon>Euteleostomi</taxon>
        <taxon>Mammalia</taxon>
        <taxon>Eutheria</taxon>
        <taxon>Euarchontoglires</taxon>
        <taxon>Glires</taxon>
        <taxon>Rodentia</taxon>
        <taxon>Myomorpha</taxon>
        <taxon>Muroidea</taxon>
        <taxon>Muridae</taxon>
        <taxon>Murinae</taxon>
        <taxon>Mus</taxon>
        <taxon>Mus</taxon>
    </lineage>
</organism>
<name>HNRPD_MOUSE</name>
<gene>
    <name type="primary">Hnrnpd</name>
    <name type="synonym">Auf1</name>
    <name type="synonym">Hnrpd</name>
</gene>
<reference key="1">
    <citation type="journal article" date="1994" name="Gene">
        <title>Characterization of cDNAs encoding the murine A+U-rich RNA-binding protein AUF1.</title>
        <authorList>
            <person name="Ehrenman K."/>
            <person name="Long L."/>
            <person name="Wagner B.J."/>
            <person name="Brewer G."/>
        </authorList>
    </citation>
    <scope>NUCLEOTIDE SEQUENCE [MRNA] OF 1-228 (ISOFORMS 2/4)</scope>
    <scope>NUCLEOTIDE SEQUENCE [MRNA] OF 25-355 (ISOFORM 3)</scope>
    <source>
        <strain>BALB/cJ</strain>
        <tissue>Embryo</tissue>
    </source>
</reference>
<reference key="2">
    <citation type="journal article" date="2004" name="Genome Res.">
        <title>The status, quality, and expansion of the NIH full-length cDNA project: the Mammalian Gene Collection (MGC).</title>
        <authorList>
            <consortium name="The MGC Project Team"/>
        </authorList>
    </citation>
    <scope>NUCLEOTIDE SEQUENCE [LARGE SCALE MRNA] (ISOFORM 3)</scope>
    <scope>NUCLEOTIDE SEQUENCE [LARGE SCALE MRNA] OF 5-355 (ISOFORM 1)</scope>
    <source>
        <tissue>Brain</tissue>
        <tissue>Salivary gland</tissue>
    </source>
</reference>
<reference key="3">
    <citation type="submission" date="2009-01" db="UniProtKB">
        <authorList>
            <person name="Lubec G."/>
            <person name="Sunyer B."/>
            <person name="Chen W.-Q."/>
        </authorList>
    </citation>
    <scope>PROTEIN SEQUENCE OF 184-197</scope>
    <scope>IDENTIFICATION BY MASS SPECTROMETRY</scope>
    <source>
        <strain>OF1</strain>
        <tissue>Hippocampus</tissue>
    </source>
</reference>
<reference key="4">
    <citation type="journal article" date="2009" name="Immunity">
        <title>The phagosomal proteome in interferon-gamma-activated macrophages.</title>
        <authorList>
            <person name="Trost M."/>
            <person name="English L."/>
            <person name="Lemieux S."/>
            <person name="Courcelles M."/>
            <person name="Desjardins M."/>
            <person name="Thibault P."/>
        </authorList>
    </citation>
    <scope>PHOSPHORYLATION [LARGE SCALE ANALYSIS] AT SER-83</scope>
    <scope>IDENTIFICATION BY MASS SPECTROMETRY [LARGE SCALE ANALYSIS]</scope>
</reference>
<reference key="5">
    <citation type="journal article" date="2010" name="Cell">
        <title>A tissue-specific atlas of mouse protein phosphorylation and expression.</title>
        <authorList>
            <person name="Huttlin E.L."/>
            <person name="Jedrychowski M.P."/>
            <person name="Elias J.E."/>
            <person name="Goswami T."/>
            <person name="Rad R."/>
            <person name="Beausoleil S.A."/>
            <person name="Villen J."/>
            <person name="Haas W."/>
            <person name="Sowa M.E."/>
            <person name="Gygi S.P."/>
        </authorList>
    </citation>
    <scope>PHOSPHORYLATION [LARGE SCALE ANALYSIS] AT SER-80; SER-83; SER-190 AND THR-193</scope>
    <scope>IDENTIFICATION BY MASS SPECTROMETRY [LARGE SCALE ANALYSIS]</scope>
    <source>
        <tissue>Brain</tissue>
        <tissue>Brown adipose tissue</tissue>
        <tissue>Heart</tissue>
        <tissue>Kidney</tissue>
        <tissue>Liver</tissue>
        <tissue>Lung</tissue>
        <tissue>Pancreas</tissue>
        <tissue>Spleen</tissue>
        <tissue>Testis</tissue>
    </source>
</reference>
<reference key="6">
    <citation type="journal article" date="2013" name="Mol. Cell">
        <title>SIRT5-mediated lysine desuccinylation impacts diverse metabolic pathways.</title>
        <authorList>
            <person name="Park J."/>
            <person name="Chen Y."/>
            <person name="Tishkoff D.X."/>
            <person name="Peng C."/>
            <person name="Tan M."/>
            <person name="Dai L."/>
            <person name="Xie Z."/>
            <person name="Zhang Y."/>
            <person name="Zwaans B.M."/>
            <person name="Skinner M.E."/>
            <person name="Lombard D.B."/>
            <person name="Zhao Y."/>
        </authorList>
    </citation>
    <scope>ACETYLATION [LARGE SCALE ANALYSIS] AT LYS-243</scope>
    <scope>IDENTIFICATION BY MASS SPECTROMETRY [LARGE SCALE ANALYSIS]</scope>
    <source>
        <tissue>Embryonic fibroblast</tissue>
    </source>
</reference>
<reference key="7">
    <citation type="journal article" date="2014" name="Mol. Cell. Proteomics">
        <title>Immunoaffinity enrichment and mass spectrometry analysis of protein methylation.</title>
        <authorList>
            <person name="Guo A."/>
            <person name="Gu H."/>
            <person name="Zhou J."/>
            <person name="Mulhern D."/>
            <person name="Wang Y."/>
            <person name="Lee K.A."/>
            <person name="Yang V."/>
            <person name="Aguiar M."/>
            <person name="Kornhauser J."/>
            <person name="Jia X."/>
            <person name="Ren J."/>
            <person name="Beausoleil S.A."/>
            <person name="Silva J.C."/>
            <person name="Vemulapalli V."/>
            <person name="Bedford M.T."/>
            <person name="Comb M.J."/>
        </authorList>
    </citation>
    <scope>METHYLATION [LARGE SCALE ANALYSIS] AT ARG-272; ARG-278; ARG-282 AND ARG-345</scope>
    <scope>METHYLATION [LARGE SCALE ANALYSIS] AT ARG-280 AND ARG-282 (ISOFORM 3)</scope>
    <scope>METHYLATION [LARGE SCALE ANALYSIS] AT ARG-261 AND ARG-263 (ISOFORM 4)</scope>
    <scope>IDENTIFICATION BY MASS SPECTROMETRY [LARGE SCALE ANALYSIS]</scope>
    <source>
        <tissue>Brain</tissue>
        <tissue>Embryo</tissue>
    </source>
</reference>
<dbReference type="EMBL" id="U11273">
    <property type="protein sequence ID" value="AAA64653.1"/>
    <property type="status" value="ALT_SEQ"/>
    <property type="molecule type" value="mRNA"/>
</dbReference>
<dbReference type="EMBL" id="U11274">
    <property type="protein sequence ID" value="AAA64654.1"/>
    <property type="status" value="ALT_SEQ"/>
    <property type="molecule type" value="mRNA"/>
</dbReference>
<dbReference type="EMBL" id="BC011172">
    <property type="protein sequence ID" value="AAH11172.2"/>
    <property type="molecule type" value="mRNA"/>
</dbReference>
<dbReference type="EMBL" id="BC049098">
    <property type="protein sequence ID" value="AAH49098.1"/>
    <property type="molecule type" value="mRNA"/>
</dbReference>
<dbReference type="CCDS" id="CCDS39180.1">
    <molecule id="Q60668-2"/>
</dbReference>
<dbReference type="CCDS" id="CCDS39181.1">
    <molecule id="Q60668-3"/>
</dbReference>
<dbReference type="CCDS" id="CCDS39182.1">
    <molecule id="Q60668-1"/>
</dbReference>
<dbReference type="CCDS" id="CCDS51571.1">
    <molecule id="Q60668-4"/>
</dbReference>
<dbReference type="PIR" id="I49069">
    <property type="entry name" value="I49069"/>
</dbReference>
<dbReference type="PIR" id="I49070">
    <property type="entry name" value="I49070"/>
</dbReference>
<dbReference type="RefSeq" id="NP_001070733.1">
    <molecule id="Q60668-1"/>
    <property type="nucleotide sequence ID" value="NM_001077265.2"/>
</dbReference>
<dbReference type="RefSeq" id="NP_001070734.1">
    <property type="nucleotide sequence ID" value="NM_001077266.2"/>
</dbReference>
<dbReference type="RefSeq" id="NP_001070735.1">
    <property type="nucleotide sequence ID" value="NM_001077267.2"/>
</dbReference>
<dbReference type="RefSeq" id="NP_031542.2">
    <molecule id="Q60668-3"/>
    <property type="nucleotide sequence ID" value="NM_007516.3"/>
</dbReference>
<dbReference type="RefSeq" id="XP_006534798.1">
    <molecule id="Q60668-1"/>
    <property type="nucleotide sequence ID" value="XM_006534735.5"/>
</dbReference>
<dbReference type="RefSeq" id="XP_036020647.1">
    <molecule id="Q60668-3"/>
    <property type="nucleotide sequence ID" value="XM_036164754.1"/>
</dbReference>
<dbReference type="SMR" id="Q60668"/>
<dbReference type="BioGRID" id="198279">
    <property type="interactions" value="561"/>
</dbReference>
<dbReference type="ComplexPortal" id="CPX-1078">
    <property type="entry name" value="mCRD-poly(A)-bridging complex"/>
</dbReference>
<dbReference type="DIP" id="DIP-31411N"/>
<dbReference type="FunCoup" id="Q60668">
    <property type="interactions" value="3534"/>
</dbReference>
<dbReference type="IntAct" id="Q60668">
    <property type="interactions" value="14"/>
</dbReference>
<dbReference type="MINT" id="Q60668"/>
<dbReference type="STRING" id="10090.ENSMUSP00000132735"/>
<dbReference type="GlyGen" id="Q60668">
    <property type="glycosylation" value="1 site, 1 O-linked glycan (1 site)"/>
</dbReference>
<dbReference type="iPTMnet" id="Q60668"/>
<dbReference type="PhosphoSitePlus" id="Q60668"/>
<dbReference type="SwissPalm" id="Q60668"/>
<dbReference type="jPOST" id="Q60668"/>
<dbReference type="PaxDb" id="10090-ENSMUSP00000132735"/>
<dbReference type="PeptideAtlas" id="Q60668"/>
<dbReference type="ProteomicsDB" id="269614">
    <molecule id="Q60668-1"/>
</dbReference>
<dbReference type="ProteomicsDB" id="269615">
    <molecule id="Q60668-2"/>
</dbReference>
<dbReference type="ProteomicsDB" id="269616">
    <molecule id="Q60668-3"/>
</dbReference>
<dbReference type="ProteomicsDB" id="269617">
    <molecule id="Q60668-4"/>
</dbReference>
<dbReference type="Pumba" id="Q60668"/>
<dbReference type="Antibodypedia" id="1448">
    <property type="antibodies" value="442 antibodies from 33 providers"/>
</dbReference>
<dbReference type="DNASU" id="11991"/>
<dbReference type="Ensembl" id="ENSMUST00000019128.15">
    <molecule id="Q60668-3"/>
    <property type="protein sequence ID" value="ENSMUSP00000019128.9"/>
    <property type="gene ID" value="ENSMUSG00000000568.16"/>
</dbReference>
<dbReference type="Ensembl" id="ENSMUST00000172361.8">
    <molecule id="Q60668-1"/>
    <property type="protein sequence ID" value="ENSMUSP00000132735.2"/>
    <property type="gene ID" value="ENSMUSG00000000568.16"/>
</dbReference>
<dbReference type="GeneID" id="11991"/>
<dbReference type="KEGG" id="mmu:11991"/>
<dbReference type="UCSC" id="uc008ygt.2">
    <molecule id="Q60668-1"/>
    <property type="organism name" value="mouse"/>
</dbReference>
<dbReference type="UCSC" id="uc008ygu.2">
    <molecule id="Q60668-3"/>
    <property type="organism name" value="mouse"/>
</dbReference>
<dbReference type="AGR" id="MGI:101947"/>
<dbReference type="CTD" id="3184"/>
<dbReference type="MGI" id="MGI:101947">
    <property type="gene designation" value="Hnrnpd"/>
</dbReference>
<dbReference type="VEuPathDB" id="HostDB:ENSMUSG00000000568"/>
<dbReference type="eggNOG" id="KOG0118">
    <property type="taxonomic scope" value="Eukaryota"/>
</dbReference>
<dbReference type="GeneTree" id="ENSGT00940000158010"/>
<dbReference type="InParanoid" id="Q60668"/>
<dbReference type="OMA" id="LQDEHTI"/>
<dbReference type="OrthoDB" id="1875751at2759"/>
<dbReference type="PhylomeDB" id="Q60668"/>
<dbReference type="TreeFam" id="TF314808"/>
<dbReference type="Reactome" id="R-MMU-450408">
    <property type="pathway name" value="AUF1 (hnRNP D0) binds and destabilizes mRNA"/>
</dbReference>
<dbReference type="Reactome" id="R-MMU-72163">
    <property type="pathway name" value="mRNA Splicing - Major Pathway"/>
</dbReference>
<dbReference type="Reactome" id="R-MMU-72203">
    <property type="pathway name" value="Processing of Capped Intron-Containing Pre-mRNA"/>
</dbReference>
<dbReference type="BioGRID-ORCS" id="11991">
    <property type="hits" value="10 hits in 80 CRISPR screens"/>
</dbReference>
<dbReference type="CD-CODE" id="764D0258">
    <property type="entry name" value="Neuronal RNP granule"/>
</dbReference>
<dbReference type="ChiTaRS" id="Hnrnpd">
    <property type="organism name" value="mouse"/>
</dbReference>
<dbReference type="PRO" id="PR:Q60668"/>
<dbReference type="Proteomes" id="UP000000589">
    <property type="component" value="Chromosome 5"/>
</dbReference>
<dbReference type="RNAct" id="Q60668">
    <property type="molecule type" value="protein"/>
</dbReference>
<dbReference type="Bgee" id="ENSMUSG00000000568">
    <property type="expression patterns" value="Expressed in embryonic post-anal tail and 267 other cell types or tissues"/>
</dbReference>
<dbReference type="ExpressionAtlas" id="Q60668">
    <property type="expression patterns" value="baseline and differential"/>
</dbReference>
<dbReference type="GO" id="GO:0005829">
    <property type="term" value="C:cytosol"/>
    <property type="evidence" value="ECO:0000266"/>
    <property type="project" value="ComplexPortal"/>
</dbReference>
<dbReference type="GO" id="GO:0098978">
    <property type="term" value="C:glutamatergic synapse"/>
    <property type="evidence" value="ECO:0007669"/>
    <property type="project" value="Ensembl"/>
</dbReference>
<dbReference type="GO" id="GO:0106002">
    <property type="term" value="C:mCRD-mediated mRNA stability complex"/>
    <property type="evidence" value="ECO:0000266"/>
    <property type="project" value="ComplexPortal"/>
</dbReference>
<dbReference type="GO" id="GO:0005654">
    <property type="term" value="C:nucleoplasm"/>
    <property type="evidence" value="ECO:0007669"/>
    <property type="project" value="Ensembl"/>
</dbReference>
<dbReference type="GO" id="GO:0014069">
    <property type="term" value="C:postsynaptic density"/>
    <property type="evidence" value="ECO:0007669"/>
    <property type="project" value="Ensembl"/>
</dbReference>
<dbReference type="GO" id="GO:1990904">
    <property type="term" value="C:ribonucleoprotein complex"/>
    <property type="evidence" value="ECO:0000250"/>
    <property type="project" value="UniProtKB"/>
</dbReference>
<dbReference type="GO" id="GO:0045202">
    <property type="term" value="C:synapse"/>
    <property type="evidence" value="ECO:0000314"/>
    <property type="project" value="SynGO"/>
</dbReference>
<dbReference type="GO" id="GO:0003682">
    <property type="term" value="F:chromatin binding"/>
    <property type="evidence" value="ECO:0007669"/>
    <property type="project" value="Ensembl"/>
</dbReference>
<dbReference type="GO" id="GO:0042826">
    <property type="term" value="F:histone deacetylase binding"/>
    <property type="evidence" value="ECO:0007669"/>
    <property type="project" value="Ensembl"/>
</dbReference>
<dbReference type="GO" id="GO:0003680">
    <property type="term" value="F:minor groove of adenine-thymine-rich DNA binding"/>
    <property type="evidence" value="ECO:0007669"/>
    <property type="project" value="Ensembl"/>
</dbReference>
<dbReference type="GO" id="GO:0035925">
    <property type="term" value="F:mRNA 3'-UTR AU-rich region binding"/>
    <property type="evidence" value="ECO:0007669"/>
    <property type="project" value="Ensembl"/>
</dbReference>
<dbReference type="GO" id="GO:0003723">
    <property type="term" value="F:RNA binding"/>
    <property type="evidence" value="ECO:0000250"/>
    <property type="project" value="UniProtKB"/>
</dbReference>
<dbReference type="GO" id="GO:0042162">
    <property type="term" value="F:telomeric DNA binding"/>
    <property type="evidence" value="ECO:0000250"/>
    <property type="project" value="UniProtKB"/>
</dbReference>
<dbReference type="GO" id="GO:0061158">
    <property type="term" value="P:3'-UTR-mediated mRNA destabilization"/>
    <property type="evidence" value="ECO:0007669"/>
    <property type="project" value="Ensembl"/>
</dbReference>
<dbReference type="GO" id="GO:0071230">
    <property type="term" value="P:cellular response to amino acid stimulus"/>
    <property type="evidence" value="ECO:0007669"/>
    <property type="project" value="Ensembl"/>
</dbReference>
<dbReference type="GO" id="GO:0071392">
    <property type="term" value="P:cellular response to estradiol stimulus"/>
    <property type="evidence" value="ECO:0007669"/>
    <property type="project" value="Ensembl"/>
</dbReference>
<dbReference type="GO" id="GO:0071732">
    <property type="term" value="P:cellular response to nitric oxide"/>
    <property type="evidence" value="ECO:0007669"/>
    <property type="project" value="Ensembl"/>
</dbReference>
<dbReference type="GO" id="GO:1904586">
    <property type="term" value="P:cellular response to putrescine"/>
    <property type="evidence" value="ECO:0007669"/>
    <property type="project" value="Ensembl"/>
</dbReference>
<dbReference type="GO" id="GO:0021549">
    <property type="term" value="P:cerebellum development"/>
    <property type="evidence" value="ECO:0007669"/>
    <property type="project" value="Ensembl"/>
</dbReference>
<dbReference type="GO" id="GO:0097167">
    <property type="term" value="P:circadian regulation of translation"/>
    <property type="evidence" value="ECO:0000250"/>
    <property type="project" value="UniProtKB"/>
</dbReference>
<dbReference type="GO" id="GO:0070934">
    <property type="term" value="P:CRD-mediated mRNA stabilization"/>
    <property type="evidence" value="ECO:0000266"/>
    <property type="project" value="ComplexPortal"/>
</dbReference>
<dbReference type="GO" id="GO:1990828">
    <property type="term" value="P:hepatocyte dedifferentiation"/>
    <property type="evidence" value="ECO:0007669"/>
    <property type="project" value="Ensembl"/>
</dbReference>
<dbReference type="GO" id="GO:0001889">
    <property type="term" value="P:liver development"/>
    <property type="evidence" value="ECO:0007669"/>
    <property type="project" value="Ensembl"/>
</dbReference>
<dbReference type="GO" id="GO:1900152">
    <property type="term" value="P:negative regulation of nuclear-transcribed mRNA catabolic process, deadenylation-dependent decay"/>
    <property type="evidence" value="ECO:0000266"/>
    <property type="project" value="ComplexPortal"/>
</dbReference>
<dbReference type="GO" id="GO:2000767">
    <property type="term" value="P:positive regulation of cytoplasmic translation"/>
    <property type="evidence" value="ECO:0000266"/>
    <property type="project" value="ComplexPortal"/>
</dbReference>
<dbReference type="GO" id="GO:1904355">
    <property type="term" value="P:positive regulation of telomere capping"/>
    <property type="evidence" value="ECO:0000315"/>
    <property type="project" value="BHF-UCL"/>
</dbReference>
<dbReference type="GO" id="GO:0032212">
    <property type="term" value="P:positive regulation of telomere maintenance via telomerase"/>
    <property type="evidence" value="ECO:0000315"/>
    <property type="project" value="BHF-UCL"/>
</dbReference>
<dbReference type="GO" id="GO:0045944">
    <property type="term" value="P:positive regulation of transcription by RNA polymerase II"/>
    <property type="evidence" value="ECO:0000315"/>
    <property type="project" value="BHF-UCL"/>
</dbReference>
<dbReference type="GO" id="GO:0045727">
    <property type="term" value="P:positive regulation of translation"/>
    <property type="evidence" value="ECO:0000250"/>
    <property type="project" value="UniProtKB"/>
</dbReference>
<dbReference type="GO" id="GO:0042752">
    <property type="term" value="P:regulation of circadian rhythm"/>
    <property type="evidence" value="ECO:0000250"/>
    <property type="project" value="UniProtKB"/>
</dbReference>
<dbReference type="GO" id="GO:0043488">
    <property type="term" value="P:regulation of mRNA stability"/>
    <property type="evidence" value="ECO:0000315"/>
    <property type="project" value="MGI"/>
</dbReference>
<dbReference type="GO" id="GO:0051592">
    <property type="term" value="P:response to calcium ion"/>
    <property type="evidence" value="ECO:0007669"/>
    <property type="project" value="Ensembl"/>
</dbReference>
<dbReference type="GO" id="GO:0051602">
    <property type="term" value="P:response to electrical stimulus"/>
    <property type="evidence" value="ECO:0007669"/>
    <property type="project" value="Ensembl"/>
</dbReference>
<dbReference type="GO" id="GO:1901355">
    <property type="term" value="P:response to rapamycin"/>
    <property type="evidence" value="ECO:0007669"/>
    <property type="project" value="Ensembl"/>
</dbReference>
<dbReference type="GO" id="GO:1904383">
    <property type="term" value="P:response to sodium phosphate"/>
    <property type="evidence" value="ECO:0007669"/>
    <property type="project" value="Ensembl"/>
</dbReference>
<dbReference type="CDD" id="cd12756">
    <property type="entry name" value="RRM1_hnRNPD"/>
    <property type="match status" value="1"/>
</dbReference>
<dbReference type="CDD" id="cd12583">
    <property type="entry name" value="RRM2_hnRNPD"/>
    <property type="match status" value="1"/>
</dbReference>
<dbReference type="FunFam" id="3.30.70.330:FF:000156">
    <property type="entry name" value="Heterogeneous nuclear ribonucleoprotein d0 isoform"/>
    <property type="match status" value="1"/>
</dbReference>
<dbReference type="FunFam" id="3.30.70.330:FF:000369">
    <property type="entry name" value="heterogeneous nuclear ribonucleoprotein D0 isoform X1"/>
    <property type="match status" value="1"/>
</dbReference>
<dbReference type="Gene3D" id="3.30.70.330">
    <property type="match status" value="2"/>
</dbReference>
<dbReference type="InterPro" id="IPR012956">
    <property type="entry name" value="CARG-binding_factor_N"/>
</dbReference>
<dbReference type="InterPro" id="IPR012677">
    <property type="entry name" value="Nucleotide-bd_a/b_plait_sf"/>
</dbReference>
<dbReference type="InterPro" id="IPR035979">
    <property type="entry name" value="RBD_domain_sf"/>
</dbReference>
<dbReference type="InterPro" id="IPR000504">
    <property type="entry name" value="RRM_dom"/>
</dbReference>
<dbReference type="PANTHER" id="PTHR48033:SF3">
    <property type="entry name" value="HETEROGENEOUS NUCLEAR RIBONUCLEOPROTEIN D0"/>
    <property type="match status" value="1"/>
</dbReference>
<dbReference type="PANTHER" id="PTHR48033">
    <property type="entry name" value="RNA-BINDING (RRM/RBD/RNP MOTIFS) FAMILY PROTEIN"/>
    <property type="match status" value="1"/>
</dbReference>
<dbReference type="Pfam" id="PF08143">
    <property type="entry name" value="CBFNT"/>
    <property type="match status" value="1"/>
</dbReference>
<dbReference type="Pfam" id="PF00076">
    <property type="entry name" value="RRM_1"/>
    <property type="match status" value="2"/>
</dbReference>
<dbReference type="SMART" id="SM00360">
    <property type="entry name" value="RRM"/>
    <property type="match status" value="2"/>
</dbReference>
<dbReference type="SUPFAM" id="SSF54928">
    <property type="entry name" value="RNA-binding domain, RBD"/>
    <property type="match status" value="2"/>
</dbReference>
<dbReference type="PROSITE" id="PS50102">
    <property type="entry name" value="RRM"/>
    <property type="match status" value="2"/>
</dbReference>
<accession>Q60668</accession>
<accession>Q60667</accession>
<accession>Q80ZJ0</accession>
<accession>Q91X94</accession>
<sequence length="355" mass="38354">MSEEQFGGDGAAAAATAAVGGSAGEQEGAMVAAAAQGPAAAAGSGSGGGGSAAGGTEGGSAEAEGAKIDASKNEEDEGHSNSSPRHTEAAAAQREEWKMFIGGLSWDTTKKDLKDYFSKFGEVVDCTLKLDPITGRSRGFGFVLFKESESVDKVMDQKEHKLNGKVIDPKRAKAMKTKEPVKKIFVGGLSPDTPEEKIREYFGGFGEVESIELPMDNKTNKRRGFCFITFKEEEPVKKIMEKKYHNVGLSKCEIKVAMSKEQYQQQQQWGSRGGFAGRARGRGGGPSQNWNQGYSNYWNQGYGNYGYNSQGYGGYGGYDYTGYNNYYGYGDYSNQQSGYGKVSRRGGHQNSYKPY</sequence>
<comment type="function">
    <text evidence="1">Binds with high affinity to RNA molecules that contain AU-rich elements (AREs) found within the 3'-UTR of many proto-oncogenes and cytokine mRNAs. Also binds to double- and single-stranded DNA sequences in a specific manner and functions a transcription factor. Each of the RNA-binding domains specifically can bind solely to a single-stranded non-monotonous 5'-UUAG-3' sequence and also weaker to the single-stranded 5'-TTAGGG-3' telomeric DNA repeat. Binds RNA oligonucleotides with 5'-UUAGGG-3' repeats more tightly than the telomeric single-stranded DNA 5'-TTAGGG-3' repeats. Binding of RRM1 to DNA inhibits the formation of DNA quadruplex structure which may play a role in telomere elongation. May be involved in translationally coupled mRNA turnover. Implicated with other RNA-binding proteins in the cytoplasmic deadenylation/translational and decay interplay of the FOS mRNA mediated by the major coding-region determinant of instability (mCRD) domain. May play a role in the regulation of the rhythmic expression of circadian clock core genes. Directly binds to the 3'UTR of CRY1 mRNA and induces CRY1 rhythmic translation. May also be involved in the regulation of PER2 translation.</text>
</comment>
<comment type="subunit">
    <text evidence="1">Identified in a IGF2BP1-dependent mRNP granule complex containing untranslated mRNAs. Part of a complex associated with the FOS mCRD domain and consisting of PABPC1, PAIP1, CSDE1/UNR and SYNCRIP. Interacts with IGF2BP2. Interacts with GTPBP1. Interacts with EIF4G1; the interaction requires RNA. Interacts with EIF3B and RPS3.</text>
</comment>
<comment type="interaction">
    <interactant intactId="EBI-299932">
        <id>Q60668</id>
    </interactant>
    <interactant intactId="EBI-444940">
        <id>P06151</id>
        <label>Ldha</label>
    </interactant>
    <organismsDiffer>false</organismsDiffer>
    <experiments>2</experiments>
</comment>
<comment type="subcellular location">
    <subcellularLocation>
        <location evidence="1">Nucleus</location>
    </subcellularLocation>
    <subcellularLocation>
        <location evidence="1">Cytoplasm</location>
    </subcellularLocation>
    <text evidence="1">Localized in cytoplasmic mRNP granules containing untranslated mRNAs. Component of ribonucleosomes. Cytoplasmic localization oscillates diurnally.</text>
</comment>
<comment type="alternative products">
    <event type="alternative splicing"/>
    <isoform>
        <id>Q60668-1</id>
        <name>1</name>
        <sequence type="displayed"/>
    </isoform>
    <isoform>
        <id>Q60668-2</id>
        <name>2</name>
        <sequence type="described" ref="VSP_007940"/>
    </isoform>
    <isoform>
        <id>Q60668-3</id>
        <name>3</name>
        <name>muAUF1-3</name>
        <sequence type="described" ref="VSP_007941"/>
    </isoform>
    <isoform>
        <id>Q60668-4</id>
        <name>4</name>
        <sequence type="described" ref="VSP_007940 VSP_007941"/>
    </isoform>
</comment>
<comment type="PTM">
    <text evidence="1">Methylated by PRMT1, in an insulin-dependent manner. The PRMT1-mediated methylation regulates its phosphorylation (By similarity).</text>
</comment>
<comment type="PTM">
    <text evidence="1">Arg-345 is dimethylated, probably to asymmetric dimethylarginine.</text>
</comment>
<comment type="sequence caution" evidence="6">
    <conflict type="frameshift">
        <sequence resource="EMBL-CDS" id="AAA64653"/>
    </conflict>
</comment>
<comment type="sequence caution" evidence="6">
    <conflict type="miscellaneous discrepancy">
        <sequence resource="EMBL-CDS" id="AAA64653"/>
    </conflict>
    <text>Contaminating sequence.</text>
</comment>
<comment type="sequence caution" evidence="6">
    <conflict type="frameshift">
        <sequence resource="EMBL-CDS" id="AAA64654"/>
    </conflict>
</comment>
<comment type="sequence caution" evidence="6">
    <conflict type="miscellaneous discrepancy">
        <sequence resource="EMBL-CDS" id="AAA64654"/>
    </conflict>
    <text>Contaminating sequence.</text>
</comment>
<feature type="initiator methionine" description="Removed" evidence="1">
    <location>
        <position position="1"/>
    </location>
</feature>
<feature type="chain" id="PRO_0000081850" description="Heterogeneous nuclear ribonucleoprotein D0">
    <location>
        <begin position="2"/>
        <end position="355"/>
    </location>
</feature>
<feature type="domain" description="RRM 1" evidence="2">
    <location>
        <begin position="97"/>
        <end position="179"/>
    </location>
</feature>
<feature type="domain" description="RRM 2" evidence="2">
    <location>
        <begin position="182"/>
        <end position="261"/>
    </location>
</feature>
<feature type="region of interest" description="Disordered" evidence="3">
    <location>
        <begin position="1"/>
        <end position="91"/>
    </location>
</feature>
<feature type="compositionally biased region" description="Low complexity" evidence="3">
    <location>
        <begin position="11"/>
        <end position="43"/>
    </location>
</feature>
<feature type="compositionally biased region" description="Gly residues" evidence="3">
    <location>
        <begin position="44"/>
        <end position="58"/>
    </location>
</feature>
<feature type="compositionally biased region" description="Basic and acidic residues" evidence="3">
    <location>
        <begin position="64"/>
        <end position="73"/>
    </location>
</feature>
<feature type="modified residue" description="N-acetylserine" evidence="1">
    <location>
        <position position="2"/>
    </location>
</feature>
<feature type="modified residue" description="Phosphoserine" evidence="1">
    <location>
        <position position="71"/>
    </location>
</feature>
<feature type="modified residue" description="Phosphoserine" evidence="8">
    <location>
        <position position="80"/>
    </location>
</feature>
<feature type="modified residue" description="Phosphoserine" evidence="1">
    <location>
        <position position="82"/>
    </location>
</feature>
<feature type="modified residue" description="Phosphoserine" evidence="7 8">
    <location>
        <position position="83"/>
    </location>
</feature>
<feature type="modified residue" description="N6-methyllysine" evidence="1">
    <location>
        <position position="119"/>
    </location>
</feature>
<feature type="modified residue" description="Phosphothreonine" evidence="1">
    <location>
        <position position="127"/>
    </location>
</feature>
<feature type="modified residue" description="N6-acetyllysine" evidence="1">
    <location>
        <position position="165"/>
    </location>
</feature>
<feature type="modified residue" description="Phosphoserine" evidence="8">
    <location>
        <position position="190"/>
    </location>
</feature>
<feature type="modified residue" description="Phosphothreonine" evidence="8">
    <location>
        <position position="193"/>
    </location>
</feature>
<feature type="modified residue" description="N6-acetyllysine" evidence="9">
    <location>
        <position position="243"/>
    </location>
</feature>
<feature type="modified residue" description="N6-acetyllysine" evidence="1">
    <location>
        <position position="251"/>
    </location>
</feature>
<feature type="modified residue" description="Phosphoserine" evidence="1">
    <location>
        <position position="271"/>
    </location>
</feature>
<feature type="modified residue" description="Omega-N-methylarginine" evidence="10">
    <location>
        <position position="272"/>
    </location>
</feature>
<feature type="modified residue" description="Omega-N-methylarginine" evidence="10">
    <location>
        <position position="278"/>
    </location>
</feature>
<feature type="modified residue" description="Omega-N-methylarginine" evidence="1">
    <location>
        <position position="280"/>
    </location>
</feature>
<feature type="modified residue" description="Omega-N-methylarginine" evidence="10">
    <location>
        <position position="282"/>
    </location>
</feature>
<feature type="modified residue" description="Asymmetric dimethylarginine; alternate" evidence="10">
    <location>
        <position position="345"/>
    </location>
</feature>
<feature type="modified residue" description="Dimethylated arginine; alternate" evidence="1">
    <location>
        <position position="345"/>
    </location>
</feature>
<feature type="modified residue" description="Omega-N-methylarginine; alternate" evidence="10">
    <location>
        <position position="345"/>
    </location>
</feature>
<feature type="cross-link" description="Glycyl lysine isopeptide (Lys-Gly) (interchain with G-Cter in SUMO2)" evidence="1">
    <location>
        <position position="72"/>
    </location>
</feature>
<feature type="cross-link" description="Glycyl lysine isopeptide (Lys-Gly) (interchain with G-Cter in SUMO2)" evidence="1">
    <location>
        <position position="129"/>
    </location>
</feature>
<feature type="cross-link" description="Glycyl lysine isopeptide (Lys-Gly) (interchain with G-Cter in SUMO2)" evidence="1">
    <location>
        <position position="197"/>
    </location>
</feature>
<feature type="splice variant" id="VSP_007940" description="In isoform 2 and isoform 4." evidence="6">
    <location>
        <begin position="74"/>
        <end position="92"/>
    </location>
</feature>
<feature type="splice variant" id="VSP_007941" description="In isoform 3 and isoform 4." evidence="4 5">
    <original>GPSQNWNQGYSNYWNQGYGNYGYNSQGYGGYGGYDYTGYNNYYGYGDYSN</original>
    <variation>D</variation>
    <location>
        <begin position="285"/>
        <end position="334"/>
    </location>
</feature>
<feature type="sequence conflict" description="In Ref. 1; AAA64653." evidence="6" ref="1">
    <original>SA</original>
    <variation>G</variation>
    <location>
        <begin position="22"/>
        <end position="23"/>
    </location>
</feature>
<feature type="sequence conflict" description="In Ref. 1; AAA64654." evidence="6" ref="1">
    <original>AQGP</original>
    <variation>RRA</variation>
    <location>
        <begin position="35"/>
        <end position="38"/>
    </location>
</feature>
<feature type="sequence conflict" description="In Ref. 1; AAA64653." evidence="6" ref="1">
    <original>AQG</original>
    <variation>RR</variation>
    <location>
        <begin position="35"/>
        <end position="37"/>
    </location>
</feature>
<feature type="sequence conflict" description="In Ref. 1; AAA64654." evidence="6" ref="1">
    <original>GSAA</original>
    <variation>LCG</variation>
    <location>
        <begin position="50"/>
        <end position="53"/>
    </location>
</feature>
<feature type="sequence conflict" description="In Ref. 1; AAA64654." evidence="6" ref="1">
    <original>N</original>
    <variation>K</variation>
    <location>
        <position position="217"/>
    </location>
</feature>
<feature type="sequence conflict" description="In Ref. 1; AAA64653." evidence="6" ref="1">
    <original>FI</original>
    <variation>ID</variation>
    <location>
        <begin position="227"/>
        <end position="228"/>
    </location>
</feature>
<feature type="modified residue" description="Omega-N-methylarginine" evidence="10">
    <location sequence="Q60668-3">
        <position position="280"/>
    </location>
</feature>
<feature type="modified residue" description="Omega-N-methylarginine" evidence="10">
    <location sequence="Q60668-3">
        <position position="282"/>
    </location>
</feature>
<feature type="modified residue" description="Omega-N-methylarginine" evidence="10">
    <location sequence="Q60668-4">
        <position position="261"/>
    </location>
</feature>
<feature type="modified residue" description="Omega-N-methylarginine" evidence="10">
    <location sequence="Q60668-4">
        <position position="263"/>
    </location>
</feature>
<evidence type="ECO:0000250" key="1">
    <source>
        <dbReference type="UniProtKB" id="Q14103"/>
    </source>
</evidence>
<evidence type="ECO:0000255" key="2">
    <source>
        <dbReference type="PROSITE-ProRule" id="PRU00176"/>
    </source>
</evidence>
<evidence type="ECO:0000256" key="3">
    <source>
        <dbReference type="SAM" id="MobiDB-lite"/>
    </source>
</evidence>
<evidence type="ECO:0000303" key="4">
    <source>
    </source>
</evidence>
<evidence type="ECO:0000303" key="5">
    <source>
    </source>
</evidence>
<evidence type="ECO:0000305" key="6"/>
<evidence type="ECO:0007744" key="7">
    <source>
    </source>
</evidence>
<evidence type="ECO:0007744" key="8">
    <source>
    </source>
</evidence>
<evidence type="ECO:0007744" key="9">
    <source>
    </source>
</evidence>
<evidence type="ECO:0007744" key="10">
    <source>
    </source>
</evidence>
<keyword id="KW-0007">Acetylation</keyword>
<keyword id="KW-0025">Alternative splicing</keyword>
<keyword id="KW-0090">Biological rhythms</keyword>
<keyword id="KW-0963">Cytoplasm</keyword>
<keyword id="KW-0903">Direct protein sequencing</keyword>
<keyword id="KW-0238">DNA-binding</keyword>
<keyword id="KW-1017">Isopeptide bond</keyword>
<keyword id="KW-0488">Methylation</keyword>
<keyword id="KW-0539">Nucleus</keyword>
<keyword id="KW-0597">Phosphoprotein</keyword>
<keyword id="KW-1185">Reference proteome</keyword>
<keyword id="KW-0677">Repeat</keyword>
<keyword id="KW-0687">Ribonucleoprotein</keyword>
<keyword id="KW-0694">RNA-binding</keyword>
<keyword id="KW-0804">Transcription</keyword>
<keyword id="KW-0805">Transcription regulation</keyword>
<keyword id="KW-0832">Ubl conjugation</keyword>